<gene>
    <name evidence="1" type="primary">drdI</name>
    <name type="ordered locus">Moth_0703</name>
</gene>
<reference key="1">
    <citation type="journal article" date="2008" name="Environ. Microbiol.">
        <title>The complete genome sequence of Moorella thermoacetica (f. Clostridium thermoaceticum).</title>
        <authorList>
            <person name="Pierce E."/>
            <person name="Xie G."/>
            <person name="Barabote R.D."/>
            <person name="Saunders E."/>
            <person name="Han C.S."/>
            <person name="Detter J.C."/>
            <person name="Richardson P."/>
            <person name="Brettin T.S."/>
            <person name="Das A."/>
            <person name="Ljungdahl L.G."/>
            <person name="Ragsdale S.W."/>
        </authorList>
    </citation>
    <scope>NUCLEOTIDE SEQUENCE [LARGE SCALE GENOMIC DNA]</scope>
    <source>
        <strain>ATCC 39073 / JCM 9320</strain>
    </source>
</reference>
<keyword id="KW-0119">Carbohydrate metabolism</keyword>
<keyword id="KW-0413">Isomerase</keyword>
<sequence>MYEPIAPISWRDGQVEMIDQTLLPGELVIIRPRTVEEMWDAIKKLKVRGAPAIGIAAALGLYLAVKDSGARDKAGFEAELQKAAAYLASSRPTAVNLFWALKRVQQAVAAAATDDVAALKELVLKEALAIRDEDEAMCRAIGEHGASLLADAEAVLTHCNAGTLATARYGTALAPIYTLAARGKVLKVFADETRPLLQGARLTTWELHQAGIPVTLITDNMAATVMARGWVQAVIVGADRITANGDVANKIGTYGVAILAREHGIPFYVAAPASTFDLSLSGGEQIPIEERDPAEVSHFGLRPTAPEGIGIFNPAFDVTPYRYVTAIITEKGVIRPPYKQNIAKVLAGESR</sequence>
<feature type="chain" id="PRO_0000357208" description="5-deoxyribose 1-phosphate isomerase">
    <location>
        <begin position="1"/>
        <end position="351"/>
    </location>
</feature>
<feature type="active site" description="Proton donor" evidence="1">
    <location>
        <position position="239"/>
    </location>
</feature>
<feature type="binding site" evidence="1">
    <location>
        <begin position="48"/>
        <end position="50"/>
    </location>
    <ligand>
        <name>substrate</name>
    </ligand>
</feature>
<feature type="binding site" evidence="1">
    <location>
        <position position="91"/>
    </location>
    <ligand>
        <name>substrate</name>
    </ligand>
</feature>
<feature type="binding site" evidence="1">
    <location>
        <position position="198"/>
    </location>
    <ligand>
        <name>substrate</name>
    </ligand>
</feature>
<feature type="binding site" evidence="1">
    <location>
        <begin position="249"/>
        <end position="250"/>
    </location>
    <ligand>
        <name>substrate</name>
    </ligand>
</feature>
<feature type="site" description="Transition state stabilizer" evidence="1">
    <location>
        <position position="159"/>
    </location>
</feature>
<protein>
    <recommendedName>
        <fullName evidence="1">5-deoxyribose 1-phosphate isomerase</fullName>
        <ecNumber evidence="1">5.3.1.-</ecNumber>
    </recommendedName>
</protein>
<comment type="function">
    <text evidence="1">Catalyzes the isomerization of 5-deoxy-alpha-D-ribose 1-phosphate to 5-deoxy-D-ribulose 1-phosphate, as part of a 5-deoxyribose salvage pathway that recycles this toxic radical SAM enzyme by-product to mainstream metabolites.</text>
</comment>
<comment type="catalytic activity">
    <reaction evidence="1">
        <text>5-deoxy-alpha-D-ribose 1-phosphate = 5-deoxy-D-ribulose 1-phosphate</text>
        <dbReference type="Rhea" id="RHEA:61296"/>
        <dbReference type="ChEBI" id="CHEBI:58749"/>
        <dbReference type="ChEBI" id="CHEBI:144504"/>
    </reaction>
    <physiologicalReaction direction="left-to-right" evidence="1">
        <dbReference type="Rhea" id="RHEA:61297"/>
    </physiologicalReaction>
</comment>
<comment type="pathway">
    <text evidence="1">Carbohydrate degradation.</text>
</comment>
<comment type="similarity">
    <text evidence="1">Belongs to the EIF-2B alpha/beta/delta subunits family. DrdI subfamily.</text>
</comment>
<name>DRDI_MOOTA</name>
<dbReference type="EC" id="5.3.1.-" evidence="1"/>
<dbReference type="EMBL" id="CP000232">
    <property type="protein sequence ID" value="ABC19021.1"/>
    <property type="molecule type" value="Genomic_DNA"/>
</dbReference>
<dbReference type="RefSeq" id="YP_429564.1">
    <property type="nucleotide sequence ID" value="NC_007644.1"/>
</dbReference>
<dbReference type="SMR" id="Q2RKL8"/>
<dbReference type="STRING" id="264732.Moth_0703"/>
<dbReference type="EnsemblBacteria" id="ABC19021">
    <property type="protein sequence ID" value="ABC19021"/>
    <property type="gene ID" value="Moth_0703"/>
</dbReference>
<dbReference type="KEGG" id="mta:Moth_0703"/>
<dbReference type="PATRIC" id="fig|264732.11.peg.752"/>
<dbReference type="eggNOG" id="COG0182">
    <property type="taxonomic scope" value="Bacteria"/>
</dbReference>
<dbReference type="HOGENOM" id="CLU_016218_1_2_9"/>
<dbReference type="OrthoDB" id="9803436at2"/>
<dbReference type="GO" id="GO:0046523">
    <property type="term" value="F:S-methyl-5-thioribose-1-phosphate isomerase activity"/>
    <property type="evidence" value="ECO:0007669"/>
    <property type="project" value="InterPro"/>
</dbReference>
<dbReference type="GO" id="GO:0019509">
    <property type="term" value="P:L-methionine salvage from methylthioadenosine"/>
    <property type="evidence" value="ECO:0007669"/>
    <property type="project" value="TreeGrafter"/>
</dbReference>
<dbReference type="GO" id="GO:0019323">
    <property type="term" value="P:pentose catabolic process"/>
    <property type="evidence" value="ECO:0007669"/>
    <property type="project" value="UniProtKB-UniRule"/>
</dbReference>
<dbReference type="FunFam" id="1.20.120.420:FF:000003">
    <property type="entry name" value="Methylthioribose-1-phosphate isomerase"/>
    <property type="match status" value="1"/>
</dbReference>
<dbReference type="FunFam" id="3.40.50.10470:FF:000006">
    <property type="entry name" value="Methylthioribose-1-phosphate isomerase"/>
    <property type="match status" value="1"/>
</dbReference>
<dbReference type="Gene3D" id="1.20.120.420">
    <property type="entry name" value="translation initiation factor eif-2b, domain 1"/>
    <property type="match status" value="1"/>
</dbReference>
<dbReference type="Gene3D" id="3.40.50.10470">
    <property type="entry name" value="Translation initiation factor eif-2b, domain 2"/>
    <property type="match status" value="1"/>
</dbReference>
<dbReference type="HAMAP" id="MF_02229">
    <property type="entry name" value="Deoxyribose1P_isomerase"/>
    <property type="match status" value="1"/>
</dbReference>
<dbReference type="HAMAP" id="MF_01678">
    <property type="entry name" value="Salvage_MtnA"/>
    <property type="match status" value="1"/>
</dbReference>
<dbReference type="InterPro" id="IPR043679">
    <property type="entry name" value="Deoxyribose1P_isomerase_DrdI"/>
</dbReference>
<dbReference type="InterPro" id="IPR000649">
    <property type="entry name" value="IF-2B-related"/>
</dbReference>
<dbReference type="InterPro" id="IPR005251">
    <property type="entry name" value="IF-M1Pi"/>
</dbReference>
<dbReference type="InterPro" id="IPR042529">
    <property type="entry name" value="IF_2B-like_C"/>
</dbReference>
<dbReference type="InterPro" id="IPR011559">
    <property type="entry name" value="Initiation_fac_2B_a/b/d"/>
</dbReference>
<dbReference type="InterPro" id="IPR027363">
    <property type="entry name" value="M1Pi_N"/>
</dbReference>
<dbReference type="InterPro" id="IPR037171">
    <property type="entry name" value="NagB/RpiA_transferase-like"/>
</dbReference>
<dbReference type="NCBIfam" id="TIGR00524">
    <property type="entry name" value="eIF-2B_rel"/>
    <property type="match status" value="1"/>
</dbReference>
<dbReference type="NCBIfam" id="NF004326">
    <property type="entry name" value="PRK05720.1"/>
    <property type="match status" value="1"/>
</dbReference>
<dbReference type="NCBIfam" id="TIGR00512">
    <property type="entry name" value="salvage_mtnA"/>
    <property type="match status" value="1"/>
</dbReference>
<dbReference type="PANTHER" id="PTHR43475">
    <property type="entry name" value="METHYLTHIORIBOSE-1-PHOSPHATE ISOMERASE"/>
    <property type="match status" value="1"/>
</dbReference>
<dbReference type="PANTHER" id="PTHR43475:SF1">
    <property type="entry name" value="METHYLTHIORIBOSE-1-PHOSPHATE ISOMERASE"/>
    <property type="match status" value="1"/>
</dbReference>
<dbReference type="Pfam" id="PF01008">
    <property type="entry name" value="IF-2B"/>
    <property type="match status" value="1"/>
</dbReference>
<dbReference type="SUPFAM" id="SSF100950">
    <property type="entry name" value="NagB/RpiA/CoA transferase-like"/>
    <property type="match status" value="1"/>
</dbReference>
<evidence type="ECO:0000255" key="1">
    <source>
        <dbReference type="HAMAP-Rule" id="MF_02229"/>
    </source>
</evidence>
<organism>
    <name type="scientific">Moorella thermoacetica (strain ATCC 39073 / JCM 9320)</name>
    <dbReference type="NCBI Taxonomy" id="264732"/>
    <lineage>
        <taxon>Bacteria</taxon>
        <taxon>Bacillati</taxon>
        <taxon>Bacillota</taxon>
        <taxon>Clostridia</taxon>
        <taxon>Moorellales</taxon>
        <taxon>Moorellaceae</taxon>
        <taxon>Moorella</taxon>
    </lineage>
</organism>
<proteinExistence type="inferred from homology"/>
<accession>Q2RKL8</accession>